<proteinExistence type="predicted"/>
<dbReference type="EMBL" id="X13400">
    <property type="protein sequence ID" value="CAA31766.1"/>
    <property type="molecule type" value="Genomic_DNA"/>
</dbReference>
<dbReference type="PIR" id="S02723">
    <property type="entry name" value="S02723"/>
</dbReference>
<dbReference type="SMR" id="P10519"/>
<dbReference type="GO" id="GO:0005576">
    <property type="term" value="C:extracellular region"/>
    <property type="evidence" value="ECO:0007669"/>
    <property type="project" value="InterPro"/>
</dbReference>
<dbReference type="Gene3D" id="3.10.20.150">
    <property type="match status" value="1"/>
</dbReference>
<dbReference type="Gene3D" id="3.10.20.180">
    <property type="match status" value="2"/>
</dbReference>
<dbReference type="InterPro" id="IPR004093">
    <property type="entry name" value="SAK"/>
</dbReference>
<dbReference type="InterPro" id="IPR036120">
    <property type="entry name" value="SAK/SK_sf"/>
</dbReference>
<dbReference type="InterPro" id="IPR008124">
    <property type="entry name" value="SK"/>
</dbReference>
<dbReference type="Pfam" id="PF02821">
    <property type="entry name" value="Staphylokinase"/>
    <property type="match status" value="2"/>
</dbReference>
<dbReference type="PRINTS" id="PR01753">
    <property type="entry name" value="STREPKINASE"/>
</dbReference>
<dbReference type="SUPFAM" id="SSF54328">
    <property type="entry name" value="Staphylokinase/streptokinase"/>
    <property type="match status" value="3"/>
</dbReference>
<accession>P10519</accession>
<organism>
    <name type="scientific">Streptococcus sp. (strain 19909)</name>
    <dbReference type="NCBI Taxonomy" id="69017"/>
    <lineage>
        <taxon>Bacteria</taxon>
        <taxon>Bacillati</taxon>
        <taxon>Bacillota</taxon>
        <taxon>Bacilli</taxon>
        <taxon>Lactobacillales</taxon>
        <taxon>Streptococcaceae</taxon>
        <taxon>Streptococcus</taxon>
    </lineage>
</organism>
<protein>
    <recommendedName>
        <fullName>Streptokinase G</fullName>
    </recommendedName>
</protein>
<feature type="signal peptide">
    <location>
        <begin position="1"/>
        <end position="26"/>
    </location>
</feature>
<feature type="chain" id="PRO_0000022430" description="Streptokinase G">
    <location>
        <begin position="27"/>
        <end position="440"/>
    </location>
</feature>
<gene>
    <name type="primary">skg</name>
</gene>
<keyword id="KW-0617">Plasminogen activation</keyword>
<keyword id="KW-0732">Signal</keyword>
<keyword id="KW-0843">Virulence</keyword>
<name>STRP_STRS1</name>
<reference key="1">
    <citation type="journal article" date="1989" name="Nucleic Acids Res.">
        <title>Nucleotide sequence of the streptokinase gene from a group-G Streptococcus.</title>
        <authorList>
            <person name="Walter F."/>
            <person name="Siegel M."/>
            <person name="Malke H."/>
        </authorList>
    </citation>
    <scope>NUCLEOTIDE SEQUENCE [GENOMIC DNA]</scope>
</reference>
<sequence length="440" mass="50199">MKNYLSFGMFALLFALTFGTVNSVQAIAGPEWLLDRPSVNNSQLVVSVAGTVEGTNQDISLKFFEIDLTSRPAHGGKTEQGLSPKSKLFATDSGAMPHKLEKADLLKAIQEQLIANVHSNDDYFEVIDFASDATITDRNGKVYFADKDGSVTLPIQPVQEFLLKGHVRVRPYKEKPVQNQAKSVDVEYTVQFTPLNPDDDFRPALKDTKLLKTLAIGDTITSQELLAQAQSILNKNHPGYTIYERDSSIVTHDNDIFRTILPMDQEFTYHVKNREQAYRINKKSGLNEEINNTDLISEKYYVLKKGEKPYDPFDRSHLKLFTIKYVDVNTNELLKSEQLLTASERNLDFRDLYDPRDKAKLLYNNLDAFGIMDYTLTGKVEDNHDDTNRIITVYMGKRPEGENASYHLAYDKDRYTEEEREVYSYLRYTGTPIPDNPNDK</sequence>
<comment type="function">
    <text>This protein is not a protease, but it activates plasminogen by complexing with it. As a potential virulence factor, it is thought to prevent the formation of effective fibrin barriers around the site of infection, thereby contributing to the invasiveness of the cells.</text>
</comment>